<protein>
    <recommendedName>
        <fullName>Rho guanine nucleotide exchange factor 6</fullName>
    </recommendedName>
    <alternativeName>
        <fullName>Alpha-Pix</fullName>
    </alternativeName>
    <alternativeName>
        <fullName>COOL-2</fullName>
    </alternativeName>
    <alternativeName>
        <fullName>PAK-interacting exchange factor alpha</fullName>
    </alternativeName>
    <alternativeName>
        <fullName>Rac/Cdc42 guanine nucleotide exchange factor 6</fullName>
    </alternativeName>
</protein>
<proteinExistence type="evidence at protein level"/>
<evidence type="ECO:0000250" key="1">
    <source>
        <dbReference type="UniProtKB" id="Q8K4I3"/>
    </source>
</evidence>
<evidence type="ECO:0000255" key="2">
    <source>
        <dbReference type="PROSITE-ProRule" id="PRU00044"/>
    </source>
</evidence>
<evidence type="ECO:0000255" key="3">
    <source>
        <dbReference type="PROSITE-ProRule" id="PRU00062"/>
    </source>
</evidence>
<evidence type="ECO:0000255" key="4">
    <source>
        <dbReference type="PROSITE-ProRule" id="PRU00145"/>
    </source>
</evidence>
<evidence type="ECO:0000255" key="5">
    <source>
        <dbReference type="PROSITE-ProRule" id="PRU00192"/>
    </source>
</evidence>
<evidence type="ECO:0000256" key="6">
    <source>
        <dbReference type="SAM" id="MobiDB-lite"/>
    </source>
</evidence>
<evidence type="ECO:0000269" key="7">
    <source>
    </source>
</evidence>
<evidence type="ECO:0000269" key="8">
    <source>
    </source>
</evidence>
<evidence type="ECO:0000269" key="9">
    <source>
    </source>
</evidence>
<evidence type="ECO:0000303" key="10">
    <source>
    </source>
</evidence>
<evidence type="ECO:0000303" key="11">
    <source>
    </source>
</evidence>
<evidence type="ECO:0000305" key="12"/>
<evidence type="ECO:0007744" key="13">
    <source>
    </source>
</evidence>
<evidence type="ECO:0007744" key="14">
    <source>
    </source>
</evidence>
<evidence type="ECO:0007744" key="15">
    <source>
    </source>
</evidence>
<evidence type="ECO:0007744" key="16">
    <source>
    </source>
</evidence>
<evidence type="ECO:0007829" key="17">
    <source>
        <dbReference type="PDB" id="1UJY"/>
    </source>
</evidence>
<evidence type="ECO:0007829" key="18">
    <source>
        <dbReference type="PDB" id="1WYR"/>
    </source>
</evidence>
<reference key="1">
    <citation type="journal article" date="2004" name="Nat. Genet.">
        <title>Complete sequencing and characterization of 21,243 full-length human cDNAs.</title>
        <authorList>
            <person name="Ota T."/>
            <person name="Suzuki Y."/>
            <person name="Nishikawa T."/>
            <person name="Otsuki T."/>
            <person name="Sugiyama T."/>
            <person name="Irie R."/>
            <person name="Wakamatsu A."/>
            <person name="Hayashi K."/>
            <person name="Sato H."/>
            <person name="Nagai K."/>
            <person name="Kimura K."/>
            <person name="Makita H."/>
            <person name="Sekine M."/>
            <person name="Obayashi M."/>
            <person name="Nishi T."/>
            <person name="Shibahara T."/>
            <person name="Tanaka T."/>
            <person name="Ishii S."/>
            <person name="Yamamoto J."/>
            <person name="Saito K."/>
            <person name="Kawai Y."/>
            <person name="Isono Y."/>
            <person name="Nakamura Y."/>
            <person name="Nagahari K."/>
            <person name="Murakami K."/>
            <person name="Yasuda T."/>
            <person name="Iwayanagi T."/>
            <person name="Wagatsuma M."/>
            <person name="Shiratori A."/>
            <person name="Sudo H."/>
            <person name="Hosoiri T."/>
            <person name="Kaku Y."/>
            <person name="Kodaira H."/>
            <person name="Kondo H."/>
            <person name="Sugawara M."/>
            <person name="Takahashi M."/>
            <person name="Kanda K."/>
            <person name="Yokoi T."/>
            <person name="Furuya T."/>
            <person name="Kikkawa E."/>
            <person name="Omura Y."/>
            <person name="Abe K."/>
            <person name="Kamihara K."/>
            <person name="Katsuta N."/>
            <person name="Sato K."/>
            <person name="Tanikawa M."/>
            <person name="Yamazaki M."/>
            <person name="Ninomiya K."/>
            <person name="Ishibashi T."/>
            <person name="Yamashita H."/>
            <person name="Murakawa K."/>
            <person name="Fujimori K."/>
            <person name="Tanai H."/>
            <person name="Kimata M."/>
            <person name="Watanabe M."/>
            <person name="Hiraoka S."/>
            <person name="Chiba Y."/>
            <person name="Ishida S."/>
            <person name="Ono Y."/>
            <person name="Takiguchi S."/>
            <person name="Watanabe S."/>
            <person name="Yosida M."/>
            <person name="Hotuta T."/>
            <person name="Kusano J."/>
            <person name="Kanehori K."/>
            <person name="Takahashi-Fujii A."/>
            <person name="Hara H."/>
            <person name="Tanase T.-O."/>
            <person name="Nomura Y."/>
            <person name="Togiya S."/>
            <person name="Komai F."/>
            <person name="Hara R."/>
            <person name="Takeuchi K."/>
            <person name="Arita M."/>
            <person name="Imose N."/>
            <person name="Musashino K."/>
            <person name="Yuuki H."/>
            <person name="Oshima A."/>
            <person name="Sasaki N."/>
            <person name="Aotsuka S."/>
            <person name="Yoshikawa Y."/>
            <person name="Matsunawa H."/>
            <person name="Ichihara T."/>
            <person name="Shiohata N."/>
            <person name="Sano S."/>
            <person name="Moriya S."/>
            <person name="Momiyama H."/>
            <person name="Satoh N."/>
            <person name="Takami S."/>
            <person name="Terashima Y."/>
            <person name="Suzuki O."/>
            <person name="Nakagawa S."/>
            <person name="Senoh A."/>
            <person name="Mizoguchi H."/>
            <person name="Goto Y."/>
            <person name="Shimizu F."/>
            <person name="Wakebe H."/>
            <person name="Hishigaki H."/>
            <person name="Watanabe T."/>
            <person name="Sugiyama A."/>
            <person name="Takemoto M."/>
            <person name="Kawakami B."/>
            <person name="Yamazaki M."/>
            <person name="Watanabe K."/>
            <person name="Kumagai A."/>
            <person name="Itakura S."/>
            <person name="Fukuzumi Y."/>
            <person name="Fujimori Y."/>
            <person name="Komiyama M."/>
            <person name="Tashiro H."/>
            <person name="Tanigami A."/>
            <person name="Fujiwara T."/>
            <person name="Ono T."/>
            <person name="Yamada K."/>
            <person name="Fujii Y."/>
            <person name="Ozaki K."/>
            <person name="Hirao M."/>
            <person name="Ohmori Y."/>
            <person name="Kawabata A."/>
            <person name="Hikiji T."/>
            <person name="Kobatake N."/>
            <person name="Inagaki H."/>
            <person name="Ikema Y."/>
            <person name="Okamoto S."/>
            <person name="Okitani R."/>
            <person name="Kawakami T."/>
            <person name="Noguchi S."/>
            <person name="Itoh T."/>
            <person name="Shigeta K."/>
            <person name="Senba T."/>
            <person name="Matsumura K."/>
            <person name="Nakajima Y."/>
            <person name="Mizuno T."/>
            <person name="Morinaga M."/>
            <person name="Sasaki M."/>
            <person name="Togashi T."/>
            <person name="Oyama M."/>
            <person name="Hata H."/>
            <person name="Watanabe M."/>
            <person name="Komatsu T."/>
            <person name="Mizushima-Sugano J."/>
            <person name="Satoh T."/>
            <person name="Shirai Y."/>
            <person name="Takahashi Y."/>
            <person name="Nakagawa K."/>
            <person name="Okumura K."/>
            <person name="Nagase T."/>
            <person name="Nomura N."/>
            <person name="Kikuchi H."/>
            <person name="Masuho Y."/>
            <person name="Yamashita R."/>
            <person name="Nakai K."/>
            <person name="Yada T."/>
            <person name="Nakamura Y."/>
            <person name="Ohara O."/>
            <person name="Isogai T."/>
            <person name="Sugano S."/>
        </authorList>
    </citation>
    <scope>NUCLEOTIDE SEQUENCE [LARGE SCALE MRNA] (ISOFORMS 1 AND 2)</scope>
    <source>
        <tissue>Brain</tissue>
        <tissue>Placenta</tissue>
    </source>
</reference>
<reference key="2">
    <citation type="journal article" date="2007" name="BMC Genomics">
        <title>The full-ORF clone resource of the German cDNA consortium.</title>
        <authorList>
            <person name="Bechtel S."/>
            <person name="Rosenfelder H."/>
            <person name="Duda A."/>
            <person name="Schmidt C.P."/>
            <person name="Ernst U."/>
            <person name="Wellenreuther R."/>
            <person name="Mehrle A."/>
            <person name="Schuster C."/>
            <person name="Bahr A."/>
            <person name="Bloecker H."/>
            <person name="Heubner D."/>
            <person name="Hoerlein A."/>
            <person name="Michel G."/>
            <person name="Wedler H."/>
            <person name="Koehrer K."/>
            <person name="Ottenwaelder B."/>
            <person name="Poustka A."/>
            <person name="Wiemann S."/>
            <person name="Schupp I."/>
        </authorList>
    </citation>
    <scope>NUCLEOTIDE SEQUENCE [LARGE SCALE MRNA]</scope>
    <source>
        <tissue>Adipose tissue</tissue>
    </source>
</reference>
<reference key="3">
    <citation type="journal article" date="2005" name="Nature">
        <title>The DNA sequence of the human X chromosome.</title>
        <authorList>
            <person name="Ross M.T."/>
            <person name="Grafham D.V."/>
            <person name="Coffey A.J."/>
            <person name="Scherer S."/>
            <person name="McLay K."/>
            <person name="Muzny D."/>
            <person name="Platzer M."/>
            <person name="Howell G.R."/>
            <person name="Burrows C."/>
            <person name="Bird C.P."/>
            <person name="Frankish A."/>
            <person name="Lovell F.L."/>
            <person name="Howe K.L."/>
            <person name="Ashurst J.L."/>
            <person name="Fulton R.S."/>
            <person name="Sudbrak R."/>
            <person name="Wen G."/>
            <person name="Jones M.C."/>
            <person name="Hurles M.E."/>
            <person name="Andrews T.D."/>
            <person name="Scott C.E."/>
            <person name="Searle S."/>
            <person name="Ramser J."/>
            <person name="Whittaker A."/>
            <person name="Deadman R."/>
            <person name="Carter N.P."/>
            <person name="Hunt S.E."/>
            <person name="Chen R."/>
            <person name="Cree A."/>
            <person name="Gunaratne P."/>
            <person name="Havlak P."/>
            <person name="Hodgson A."/>
            <person name="Metzker M.L."/>
            <person name="Richards S."/>
            <person name="Scott G."/>
            <person name="Steffen D."/>
            <person name="Sodergren E."/>
            <person name="Wheeler D.A."/>
            <person name="Worley K.C."/>
            <person name="Ainscough R."/>
            <person name="Ambrose K.D."/>
            <person name="Ansari-Lari M.A."/>
            <person name="Aradhya S."/>
            <person name="Ashwell R.I."/>
            <person name="Babbage A.K."/>
            <person name="Bagguley C.L."/>
            <person name="Ballabio A."/>
            <person name="Banerjee R."/>
            <person name="Barker G.E."/>
            <person name="Barlow K.F."/>
            <person name="Barrett I.P."/>
            <person name="Bates K.N."/>
            <person name="Beare D.M."/>
            <person name="Beasley H."/>
            <person name="Beasley O."/>
            <person name="Beck A."/>
            <person name="Bethel G."/>
            <person name="Blechschmidt K."/>
            <person name="Brady N."/>
            <person name="Bray-Allen S."/>
            <person name="Bridgeman A.M."/>
            <person name="Brown A.J."/>
            <person name="Brown M.J."/>
            <person name="Bonnin D."/>
            <person name="Bruford E.A."/>
            <person name="Buhay C."/>
            <person name="Burch P."/>
            <person name="Burford D."/>
            <person name="Burgess J."/>
            <person name="Burrill W."/>
            <person name="Burton J."/>
            <person name="Bye J.M."/>
            <person name="Carder C."/>
            <person name="Carrel L."/>
            <person name="Chako J."/>
            <person name="Chapman J.C."/>
            <person name="Chavez D."/>
            <person name="Chen E."/>
            <person name="Chen G."/>
            <person name="Chen Y."/>
            <person name="Chen Z."/>
            <person name="Chinault C."/>
            <person name="Ciccodicola A."/>
            <person name="Clark S.Y."/>
            <person name="Clarke G."/>
            <person name="Clee C.M."/>
            <person name="Clegg S."/>
            <person name="Clerc-Blankenburg K."/>
            <person name="Clifford K."/>
            <person name="Cobley V."/>
            <person name="Cole C.G."/>
            <person name="Conquer J.S."/>
            <person name="Corby N."/>
            <person name="Connor R.E."/>
            <person name="David R."/>
            <person name="Davies J."/>
            <person name="Davis C."/>
            <person name="Davis J."/>
            <person name="Delgado O."/>
            <person name="Deshazo D."/>
            <person name="Dhami P."/>
            <person name="Ding Y."/>
            <person name="Dinh H."/>
            <person name="Dodsworth S."/>
            <person name="Draper H."/>
            <person name="Dugan-Rocha S."/>
            <person name="Dunham A."/>
            <person name="Dunn M."/>
            <person name="Durbin K.J."/>
            <person name="Dutta I."/>
            <person name="Eades T."/>
            <person name="Ellwood M."/>
            <person name="Emery-Cohen A."/>
            <person name="Errington H."/>
            <person name="Evans K.L."/>
            <person name="Faulkner L."/>
            <person name="Francis F."/>
            <person name="Frankland J."/>
            <person name="Fraser A.E."/>
            <person name="Galgoczy P."/>
            <person name="Gilbert J."/>
            <person name="Gill R."/>
            <person name="Gloeckner G."/>
            <person name="Gregory S.G."/>
            <person name="Gribble S."/>
            <person name="Griffiths C."/>
            <person name="Grocock R."/>
            <person name="Gu Y."/>
            <person name="Gwilliam R."/>
            <person name="Hamilton C."/>
            <person name="Hart E.A."/>
            <person name="Hawes A."/>
            <person name="Heath P.D."/>
            <person name="Heitmann K."/>
            <person name="Hennig S."/>
            <person name="Hernandez J."/>
            <person name="Hinzmann B."/>
            <person name="Ho S."/>
            <person name="Hoffs M."/>
            <person name="Howden P.J."/>
            <person name="Huckle E.J."/>
            <person name="Hume J."/>
            <person name="Hunt P.J."/>
            <person name="Hunt A.R."/>
            <person name="Isherwood J."/>
            <person name="Jacob L."/>
            <person name="Johnson D."/>
            <person name="Jones S."/>
            <person name="de Jong P.J."/>
            <person name="Joseph S.S."/>
            <person name="Keenan S."/>
            <person name="Kelly S."/>
            <person name="Kershaw J.K."/>
            <person name="Khan Z."/>
            <person name="Kioschis P."/>
            <person name="Klages S."/>
            <person name="Knights A.J."/>
            <person name="Kosiura A."/>
            <person name="Kovar-Smith C."/>
            <person name="Laird G.K."/>
            <person name="Langford C."/>
            <person name="Lawlor S."/>
            <person name="Leversha M."/>
            <person name="Lewis L."/>
            <person name="Liu W."/>
            <person name="Lloyd C."/>
            <person name="Lloyd D.M."/>
            <person name="Loulseged H."/>
            <person name="Loveland J.E."/>
            <person name="Lovell J.D."/>
            <person name="Lozado R."/>
            <person name="Lu J."/>
            <person name="Lyne R."/>
            <person name="Ma J."/>
            <person name="Maheshwari M."/>
            <person name="Matthews L.H."/>
            <person name="McDowall J."/>
            <person name="McLaren S."/>
            <person name="McMurray A."/>
            <person name="Meidl P."/>
            <person name="Meitinger T."/>
            <person name="Milne S."/>
            <person name="Miner G."/>
            <person name="Mistry S.L."/>
            <person name="Morgan M."/>
            <person name="Morris S."/>
            <person name="Mueller I."/>
            <person name="Mullikin J.C."/>
            <person name="Nguyen N."/>
            <person name="Nordsiek G."/>
            <person name="Nyakatura G."/>
            <person name="O'dell C.N."/>
            <person name="Okwuonu G."/>
            <person name="Palmer S."/>
            <person name="Pandian R."/>
            <person name="Parker D."/>
            <person name="Parrish J."/>
            <person name="Pasternak S."/>
            <person name="Patel D."/>
            <person name="Pearce A.V."/>
            <person name="Pearson D.M."/>
            <person name="Pelan S.E."/>
            <person name="Perez L."/>
            <person name="Porter K.M."/>
            <person name="Ramsey Y."/>
            <person name="Reichwald K."/>
            <person name="Rhodes S."/>
            <person name="Ridler K.A."/>
            <person name="Schlessinger D."/>
            <person name="Schueler M.G."/>
            <person name="Sehra H.K."/>
            <person name="Shaw-Smith C."/>
            <person name="Shen H."/>
            <person name="Sheridan E.M."/>
            <person name="Shownkeen R."/>
            <person name="Skuce C.D."/>
            <person name="Smith M.L."/>
            <person name="Sotheran E.C."/>
            <person name="Steingruber H.E."/>
            <person name="Steward C.A."/>
            <person name="Storey R."/>
            <person name="Swann R.M."/>
            <person name="Swarbreck D."/>
            <person name="Tabor P.E."/>
            <person name="Taudien S."/>
            <person name="Taylor T."/>
            <person name="Teague B."/>
            <person name="Thomas K."/>
            <person name="Thorpe A."/>
            <person name="Timms K."/>
            <person name="Tracey A."/>
            <person name="Trevanion S."/>
            <person name="Tromans A.C."/>
            <person name="d'Urso M."/>
            <person name="Verduzco D."/>
            <person name="Villasana D."/>
            <person name="Waldron L."/>
            <person name="Wall M."/>
            <person name="Wang Q."/>
            <person name="Warren J."/>
            <person name="Warry G.L."/>
            <person name="Wei X."/>
            <person name="West A."/>
            <person name="Whitehead S.L."/>
            <person name="Whiteley M.N."/>
            <person name="Wilkinson J.E."/>
            <person name="Willey D.L."/>
            <person name="Williams G."/>
            <person name="Williams L."/>
            <person name="Williamson A."/>
            <person name="Williamson H."/>
            <person name="Wilming L."/>
            <person name="Woodmansey R.L."/>
            <person name="Wray P.W."/>
            <person name="Yen J."/>
            <person name="Zhang J."/>
            <person name="Zhou J."/>
            <person name="Zoghbi H."/>
            <person name="Zorilla S."/>
            <person name="Buck D."/>
            <person name="Reinhardt R."/>
            <person name="Poustka A."/>
            <person name="Rosenthal A."/>
            <person name="Lehrach H."/>
            <person name="Meindl A."/>
            <person name="Minx P.J."/>
            <person name="Hillier L.W."/>
            <person name="Willard H.F."/>
            <person name="Wilson R.K."/>
            <person name="Waterston R.H."/>
            <person name="Rice C.M."/>
            <person name="Vaudin M."/>
            <person name="Coulson A."/>
            <person name="Nelson D.L."/>
            <person name="Weinstock G."/>
            <person name="Sulston J.E."/>
            <person name="Durbin R.M."/>
            <person name="Hubbard T."/>
            <person name="Gibbs R.A."/>
            <person name="Beck S."/>
            <person name="Rogers J."/>
            <person name="Bentley D.R."/>
        </authorList>
    </citation>
    <scope>NUCLEOTIDE SEQUENCE [LARGE SCALE GENOMIC DNA]</scope>
</reference>
<reference key="4">
    <citation type="submission" date="2005-09" db="EMBL/GenBank/DDBJ databases">
        <authorList>
            <person name="Mural R.J."/>
            <person name="Istrail S."/>
            <person name="Sutton G.G."/>
            <person name="Florea L."/>
            <person name="Halpern A.L."/>
            <person name="Mobarry C.M."/>
            <person name="Lippert R."/>
            <person name="Walenz B."/>
            <person name="Shatkay H."/>
            <person name="Dew I."/>
            <person name="Miller J.R."/>
            <person name="Flanigan M.J."/>
            <person name="Edwards N.J."/>
            <person name="Bolanos R."/>
            <person name="Fasulo D."/>
            <person name="Halldorsson B.V."/>
            <person name="Hannenhalli S."/>
            <person name="Turner R."/>
            <person name="Yooseph S."/>
            <person name="Lu F."/>
            <person name="Nusskern D.R."/>
            <person name="Shue B.C."/>
            <person name="Zheng X.H."/>
            <person name="Zhong F."/>
            <person name="Delcher A.L."/>
            <person name="Huson D.H."/>
            <person name="Kravitz S.A."/>
            <person name="Mouchard L."/>
            <person name="Reinert K."/>
            <person name="Remington K.A."/>
            <person name="Clark A.G."/>
            <person name="Waterman M.S."/>
            <person name="Eichler E.E."/>
            <person name="Adams M.D."/>
            <person name="Hunkapiller M.W."/>
            <person name="Myers E.W."/>
            <person name="Venter J.C."/>
        </authorList>
    </citation>
    <scope>NUCLEOTIDE SEQUENCE [LARGE SCALE GENOMIC DNA]</scope>
</reference>
<reference key="5">
    <citation type="journal article" date="2004" name="Genome Res.">
        <title>The status, quality, and expansion of the NIH full-length cDNA project: the Mammalian Gene Collection (MGC).</title>
        <authorList>
            <consortium name="The MGC Project Team"/>
        </authorList>
    </citation>
    <scope>NUCLEOTIDE SEQUENCE [LARGE SCALE MRNA] (ISOFORMS 1 AND 2)</scope>
    <source>
        <tissue>Testis</tissue>
    </source>
</reference>
<reference key="6">
    <citation type="journal article" date="2000" name="Nat. Genet.">
        <title>Mutations in ARHGEF6, encoding a guanine nucleotide exchange factor for Rho GTPases, in patients with X-linked mental retardation.</title>
        <authorList>
            <person name="Kutsche K."/>
            <person name="Yntema H."/>
            <person name="Brandt A."/>
            <person name="Jantke I."/>
            <person name="Nothwang H.G."/>
            <person name="Orth U."/>
            <person name="Boavida M.G."/>
            <person name="David D."/>
            <person name="Chelly J."/>
            <person name="Fryns J.-P."/>
            <person name="Moraine C."/>
            <person name="Ropers H.-H."/>
            <person name="Hamel B.C.J."/>
            <person name="van Bokhoven H."/>
            <person name="Gal A."/>
        </authorList>
    </citation>
    <scope>NUCLEOTIDE SEQUENCE [MRNA] OF 1-3 (ISOFORM 1)</scope>
</reference>
<reference key="7">
    <citation type="journal article" date="1994" name="DNA Res.">
        <title>Prediction of the coding sequences of unidentified human genes. I. The coding sequences of 40 new genes (KIAA0001-KIAA0040) deduced by analysis of randomly sampled cDNA clones from human immature myeloid cell line KG-1.</title>
        <authorList>
            <person name="Nomura N."/>
            <person name="Miyajima N."/>
            <person name="Sazuka T."/>
            <person name="Tanaka A."/>
            <person name="Kawarabayasi Y."/>
            <person name="Sato S."/>
            <person name="Nagase T."/>
            <person name="Seki N."/>
            <person name="Ishikawa K."/>
            <person name="Tabata S."/>
        </authorList>
    </citation>
    <scope>NUCLEOTIDE SEQUENCE [LARGE SCALE MRNA] OF 4-776 (ISOFORM 1)</scope>
    <source>
        <tissue>Bone marrow</tissue>
    </source>
</reference>
<reference key="8">
    <citation type="journal article" date="2001" name="Am. J. Med. Genet.">
        <title>Characterization of ARHGEF6, a guanine nucleotide exchange factor for Rho GTPases and a candidate gene for X-linked mental retardation: mutation screening in Borjeson-Forssman-Lehmann syndrome and MRX27.</title>
        <authorList>
            <person name="Lower K.M."/>
            <person name="Gecz J."/>
        </authorList>
    </citation>
    <scope>CHARACTERIZATION</scope>
</reference>
<reference key="9">
    <citation type="journal article" date="2004" name="Anal. Chem.">
        <title>Robust phosphoproteomic profiling of tyrosine phosphorylation sites from human T cells using immobilized metal affinity chromatography and tandem mass spectrometry.</title>
        <authorList>
            <person name="Brill L.M."/>
            <person name="Salomon A.R."/>
            <person name="Ficarro S.B."/>
            <person name="Mukherji M."/>
            <person name="Stettler-Gill M."/>
            <person name="Peters E.C."/>
        </authorList>
    </citation>
    <scope>PHOSPHORYLATION [LARGE SCALE ANALYSIS] AT SER-150</scope>
    <scope>IDENTIFICATION BY MASS SPECTROMETRY [LARGE SCALE ANALYSIS]</scope>
    <source>
        <tissue>Leukemic T-cell</tissue>
    </source>
</reference>
<reference key="10">
    <citation type="journal article" date="2004" name="Genes Cells">
        <title>The first CH domain of affixin activates Cdc42 and Rac1 through alphaPIX, a Cdc42/Rac1-specific guanine nucleotide exchanging factor.</title>
        <authorList>
            <person name="Mishima W."/>
            <person name="Suzuki A."/>
            <person name="Yamaji S."/>
            <person name="Yoshimi R."/>
            <person name="Ueda A."/>
            <person name="Kaneko T."/>
            <person name="Tanaka J."/>
            <person name="Miwa Y."/>
            <person name="Ohno S."/>
            <person name="Ishigatsubo Y."/>
        </authorList>
    </citation>
    <scope>INTERACTION WITH PARVB</scope>
</reference>
<reference key="11">
    <citation type="journal article" date="2006" name="J. Immunol.">
        <title>The gamma-parvin-integrin-linked kinase complex is critically involved in leukocyte-substrate interaction.</title>
        <authorList>
            <person name="Yoshimi R."/>
            <person name="Yamaji S."/>
            <person name="Suzuki A."/>
            <person name="Mishima W."/>
            <person name="Okamura M."/>
            <person name="Obana T."/>
            <person name="Matsuda C."/>
            <person name="Miwa Y."/>
            <person name="Ohno S."/>
            <person name="Ishigatsubo Y."/>
        </authorList>
    </citation>
    <scope>INTERACTION WITH PARVG</scope>
</reference>
<reference key="12">
    <citation type="journal article" date="2009" name="Sci. Signal.">
        <title>Quantitative phosphoproteomic analysis of T cell receptor signaling reveals system-wide modulation of protein-protein interactions.</title>
        <authorList>
            <person name="Mayya V."/>
            <person name="Lundgren D.H."/>
            <person name="Hwang S.-I."/>
            <person name="Rezaul K."/>
            <person name="Wu L."/>
            <person name="Eng J.K."/>
            <person name="Rodionov V."/>
            <person name="Han D.K."/>
        </authorList>
    </citation>
    <scope>PHOSPHORYLATION [LARGE SCALE ANALYSIS] AT SER-126; SER-144; SER-150; SER-640 AND SER-684</scope>
    <scope>IDENTIFICATION BY MASS SPECTROMETRY [LARGE SCALE ANALYSIS]</scope>
    <source>
        <tissue>Leukemic T-cell</tissue>
    </source>
</reference>
<reference key="13">
    <citation type="journal article" date="2012" name="PLoS ONE">
        <title>Bin2 is a membrane sculpting N-BAR protein that influences leucocyte podosomes, motility and phagocytosis.</title>
        <authorList>
            <person name="Sanchez-Barrena M.J."/>
            <person name="Vallis Y."/>
            <person name="Clatworthy M.R."/>
            <person name="Doherty G.J."/>
            <person name="Veprintsev D.B."/>
            <person name="Evans P.R."/>
            <person name="McMahon H.T."/>
        </authorList>
    </citation>
    <scope>INTERACTION WITH BIN2</scope>
    <scope>IDENTIFICATION IN A COMPLEX WITH BIN2 AND GIT2</scope>
</reference>
<reference key="14">
    <citation type="journal article" date="2013" name="J. Proteome Res.">
        <title>Toward a comprehensive characterization of a human cancer cell phosphoproteome.</title>
        <authorList>
            <person name="Zhou H."/>
            <person name="Di Palma S."/>
            <person name="Preisinger C."/>
            <person name="Peng M."/>
            <person name="Polat A.N."/>
            <person name="Heck A.J."/>
            <person name="Mohammed S."/>
        </authorList>
    </citation>
    <scope>PHOSPHORYLATION [LARGE SCALE ANALYSIS] AT SER-684</scope>
    <scope>IDENTIFICATION BY MASS SPECTROMETRY [LARGE SCALE ANALYSIS]</scope>
    <source>
        <tissue>Erythroleukemia</tissue>
    </source>
</reference>
<reference key="15">
    <citation type="journal article" date="2014" name="J. Proteomics">
        <title>An enzyme assisted RP-RPLC approach for in-depth analysis of human liver phosphoproteome.</title>
        <authorList>
            <person name="Bian Y."/>
            <person name="Song C."/>
            <person name="Cheng K."/>
            <person name="Dong M."/>
            <person name="Wang F."/>
            <person name="Huang J."/>
            <person name="Sun D."/>
            <person name="Wang L."/>
            <person name="Ye M."/>
            <person name="Zou H."/>
        </authorList>
    </citation>
    <scope>PHOSPHORYLATION [LARGE SCALE ANALYSIS] AT THR-133; SER-225 AND SER-684</scope>
    <scope>IDENTIFICATION BY MASS SPECTROMETRY [LARGE SCALE ANALYSIS]</scope>
    <source>
        <tissue>Liver</tissue>
    </source>
</reference>
<reference key="16">
    <citation type="submission" date="2004-02" db="PDB data bank">
        <title>Solution structure of the CH domain and the SH3 domain in RAC/CDC42 guanine nucleotide exchange factor (GEF) 6.</title>
        <authorList>
            <consortium name="RIKEN structural genomics initiative (RSGI)"/>
        </authorList>
    </citation>
    <scope>STRUCTURE BY NMR OF 4-222</scope>
</reference>
<dbReference type="EMBL" id="AK291742">
    <property type="protein sequence ID" value="BAF84431.1"/>
    <property type="molecule type" value="mRNA"/>
</dbReference>
<dbReference type="EMBL" id="AK294929">
    <property type="protein sequence ID" value="BAH11929.1"/>
    <property type="molecule type" value="mRNA"/>
</dbReference>
<dbReference type="EMBL" id="BX537390">
    <property type="protein sequence ID" value="CAD97632.1"/>
    <property type="molecule type" value="mRNA"/>
</dbReference>
<dbReference type="EMBL" id="AL683813">
    <property type="status" value="NOT_ANNOTATED_CDS"/>
    <property type="molecule type" value="Genomic_DNA"/>
</dbReference>
<dbReference type="EMBL" id="AL135783">
    <property type="status" value="NOT_ANNOTATED_CDS"/>
    <property type="molecule type" value="Genomic_DNA"/>
</dbReference>
<dbReference type="EMBL" id="CH471150">
    <property type="protein sequence ID" value="EAW88460.1"/>
    <property type="molecule type" value="Genomic_DNA"/>
</dbReference>
<dbReference type="EMBL" id="CH471150">
    <property type="protein sequence ID" value="EAW88461.1"/>
    <property type="molecule type" value="Genomic_DNA"/>
</dbReference>
<dbReference type="EMBL" id="BC039856">
    <property type="protein sequence ID" value="AAH39856.1"/>
    <property type="molecule type" value="mRNA"/>
</dbReference>
<dbReference type="EMBL" id="BC043505">
    <property type="protein sequence ID" value="AAH43505.1"/>
    <property type="status" value="ALT_TERM"/>
    <property type="molecule type" value="mRNA"/>
</dbReference>
<dbReference type="EMBL" id="AF207831">
    <property type="protein sequence ID" value="AAG27169.1"/>
    <property type="molecule type" value="mRNA"/>
</dbReference>
<dbReference type="EMBL" id="D13631">
    <property type="protein sequence ID" value="BAA02796.1"/>
    <property type="status" value="ALT_INIT"/>
    <property type="molecule type" value="mRNA"/>
</dbReference>
<dbReference type="EMBL" id="D25304">
    <property type="protein sequence ID" value="BAA04985.1"/>
    <property type="molecule type" value="mRNA"/>
</dbReference>
<dbReference type="CCDS" id="CCDS14660.1">
    <molecule id="Q15052-1"/>
</dbReference>
<dbReference type="CCDS" id="CCDS78509.1">
    <molecule id="Q15052-2"/>
</dbReference>
<dbReference type="RefSeq" id="NP_001293106.1">
    <molecule id="Q15052-2"/>
    <property type="nucleotide sequence ID" value="NM_001306177.2"/>
</dbReference>
<dbReference type="RefSeq" id="NP_004831.1">
    <molecule id="Q15052-1"/>
    <property type="nucleotide sequence ID" value="NM_004840.3"/>
</dbReference>
<dbReference type="PDB" id="1UJY">
    <property type="method" value="NMR"/>
    <property type="chains" value="A=160-222"/>
</dbReference>
<dbReference type="PDB" id="1WYR">
    <property type="method" value="NMR"/>
    <property type="chains" value="A=4-111"/>
</dbReference>
<dbReference type="PDBsum" id="1UJY"/>
<dbReference type="PDBsum" id="1WYR"/>
<dbReference type="BMRB" id="Q15052"/>
<dbReference type="SMR" id="Q15052"/>
<dbReference type="BioGRID" id="114847">
    <property type="interactions" value="91"/>
</dbReference>
<dbReference type="CORUM" id="Q15052"/>
<dbReference type="DIP" id="DIP-42694N"/>
<dbReference type="FunCoup" id="Q15052">
    <property type="interactions" value="975"/>
</dbReference>
<dbReference type="IntAct" id="Q15052">
    <property type="interactions" value="66"/>
</dbReference>
<dbReference type="MINT" id="Q15052"/>
<dbReference type="STRING" id="9606.ENSP00000250617"/>
<dbReference type="GlyCosmos" id="Q15052">
    <property type="glycosylation" value="2 sites, 2 glycans"/>
</dbReference>
<dbReference type="GlyGen" id="Q15052">
    <property type="glycosylation" value="2 sites, 2 O-linked glycans (2 sites)"/>
</dbReference>
<dbReference type="iPTMnet" id="Q15052"/>
<dbReference type="PhosphoSitePlus" id="Q15052"/>
<dbReference type="BioMuta" id="ARHGEF6"/>
<dbReference type="DMDM" id="17371603"/>
<dbReference type="CPTAC" id="CPTAC-1735"/>
<dbReference type="CPTAC" id="CPTAC-1736"/>
<dbReference type="jPOST" id="Q15052"/>
<dbReference type="MassIVE" id="Q15052"/>
<dbReference type="PaxDb" id="9606-ENSP00000250617"/>
<dbReference type="PeptideAtlas" id="Q15052"/>
<dbReference type="ProteomicsDB" id="60406">
    <molecule id="Q15052-1"/>
</dbReference>
<dbReference type="ProteomicsDB" id="60407">
    <molecule id="Q15052-2"/>
</dbReference>
<dbReference type="Pumba" id="Q15052"/>
<dbReference type="Antibodypedia" id="515">
    <property type="antibodies" value="155 antibodies from 27 providers"/>
</dbReference>
<dbReference type="DNASU" id="9459"/>
<dbReference type="Ensembl" id="ENST00000250617.7">
    <molecule id="Q15052-1"/>
    <property type="protein sequence ID" value="ENSP00000250617.6"/>
    <property type="gene ID" value="ENSG00000129675.16"/>
</dbReference>
<dbReference type="Ensembl" id="ENST00000370620.5">
    <molecule id="Q15052-2"/>
    <property type="protein sequence ID" value="ENSP00000359654.1"/>
    <property type="gene ID" value="ENSG00000129675.16"/>
</dbReference>
<dbReference type="Ensembl" id="ENST00000370622.5">
    <molecule id="Q15052-2"/>
    <property type="protein sequence ID" value="ENSP00000359656.1"/>
    <property type="gene ID" value="ENSG00000129675.16"/>
</dbReference>
<dbReference type="GeneID" id="9459"/>
<dbReference type="KEGG" id="hsa:9459"/>
<dbReference type="MANE-Select" id="ENST00000250617.7">
    <property type="protein sequence ID" value="ENSP00000250617.6"/>
    <property type="RefSeq nucleotide sequence ID" value="NM_004840.3"/>
    <property type="RefSeq protein sequence ID" value="NP_004831.1"/>
</dbReference>
<dbReference type="UCSC" id="uc004fab.5">
    <molecule id="Q15052-1"/>
    <property type="organism name" value="human"/>
</dbReference>
<dbReference type="AGR" id="HGNC:685"/>
<dbReference type="CTD" id="9459"/>
<dbReference type="DisGeNET" id="9459"/>
<dbReference type="GeneCards" id="ARHGEF6"/>
<dbReference type="HGNC" id="HGNC:685">
    <property type="gene designation" value="ARHGEF6"/>
</dbReference>
<dbReference type="HPA" id="ENSG00000129675">
    <property type="expression patterns" value="Low tissue specificity"/>
</dbReference>
<dbReference type="MalaCards" id="ARHGEF6"/>
<dbReference type="MIM" id="300267">
    <property type="type" value="gene"/>
</dbReference>
<dbReference type="neXtProt" id="NX_Q15052"/>
<dbReference type="OpenTargets" id="ENSG00000129675"/>
<dbReference type="Orphanet" id="777">
    <property type="disease" value="X-linked non-syndromic intellectual disability"/>
</dbReference>
<dbReference type="PharmGKB" id="PA24976"/>
<dbReference type="VEuPathDB" id="HostDB:ENSG00000129675"/>
<dbReference type="eggNOG" id="KOG2070">
    <property type="taxonomic scope" value="Eukaryota"/>
</dbReference>
<dbReference type="GeneTree" id="ENSGT00940000158723"/>
<dbReference type="HOGENOM" id="CLU_017010_1_1_1"/>
<dbReference type="InParanoid" id="Q15052"/>
<dbReference type="OMA" id="ITGNMVE"/>
<dbReference type="OrthoDB" id="6019202at2759"/>
<dbReference type="PAN-GO" id="Q15052">
    <property type="GO annotations" value="4 GO annotations based on evolutionary models"/>
</dbReference>
<dbReference type="PhylomeDB" id="Q15052"/>
<dbReference type="TreeFam" id="TF316105"/>
<dbReference type="PathwayCommons" id="Q15052"/>
<dbReference type="Reactome" id="R-HSA-193648">
    <property type="pathway name" value="NRAGE signals death through JNK"/>
</dbReference>
<dbReference type="Reactome" id="R-HSA-416482">
    <property type="pathway name" value="G alpha (12/13) signalling events"/>
</dbReference>
<dbReference type="Reactome" id="R-HSA-446388">
    <property type="pathway name" value="Regulation of cytoskeletal remodeling and cell spreading by IPP complex components"/>
</dbReference>
<dbReference type="Reactome" id="R-HSA-8964616">
    <property type="pathway name" value="G beta:gamma signalling through CDC42"/>
</dbReference>
<dbReference type="Reactome" id="R-HSA-9013148">
    <property type="pathway name" value="CDC42 GTPase cycle"/>
</dbReference>
<dbReference type="Reactome" id="R-HSA-9013149">
    <property type="pathway name" value="RAC1 GTPase cycle"/>
</dbReference>
<dbReference type="Reactome" id="R-HSA-9013420">
    <property type="pathway name" value="RHOU GTPase cycle"/>
</dbReference>
<dbReference type="SignaLink" id="Q15052"/>
<dbReference type="SIGNOR" id="Q15052"/>
<dbReference type="BioGRID-ORCS" id="9459">
    <property type="hits" value="18 hits in 781 CRISPR screens"/>
</dbReference>
<dbReference type="ChiTaRS" id="ARHGEF6">
    <property type="organism name" value="human"/>
</dbReference>
<dbReference type="EvolutionaryTrace" id="Q15052"/>
<dbReference type="GeneWiki" id="ARHGEF6"/>
<dbReference type="GenomeRNAi" id="9459"/>
<dbReference type="Pharos" id="Q15052">
    <property type="development level" value="Tbio"/>
</dbReference>
<dbReference type="PRO" id="PR:Q15052"/>
<dbReference type="Proteomes" id="UP000005640">
    <property type="component" value="Chromosome X"/>
</dbReference>
<dbReference type="RNAct" id="Q15052">
    <property type="molecule type" value="protein"/>
</dbReference>
<dbReference type="Bgee" id="ENSG00000129675">
    <property type="expression patterns" value="Expressed in biceps brachii and 208 other cell types or tissues"/>
</dbReference>
<dbReference type="GO" id="GO:0005911">
    <property type="term" value="C:cell-cell junction"/>
    <property type="evidence" value="ECO:0007669"/>
    <property type="project" value="Ensembl"/>
</dbReference>
<dbReference type="GO" id="GO:0005737">
    <property type="term" value="C:cytoplasm"/>
    <property type="evidence" value="ECO:0000318"/>
    <property type="project" value="GO_Central"/>
</dbReference>
<dbReference type="GO" id="GO:0005829">
    <property type="term" value="C:cytosol"/>
    <property type="evidence" value="ECO:0000304"/>
    <property type="project" value="Reactome"/>
</dbReference>
<dbReference type="GO" id="GO:0030027">
    <property type="term" value="C:lamellipodium"/>
    <property type="evidence" value="ECO:0000250"/>
    <property type="project" value="UniProtKB"/>
</dbReference>
<dbReference type="GO" id="GO:0005096">
    <property type="term" value="F:GTPase activator activity"/>
    <property type="evidence" value="ECO:0000303"/>
    <property type="project" value="UniProtKB"/>
</dbReference>
<dbReference type="GO" id="GO:0005085">
    <property type="term" value="F:guanyl-nucleotide exchange factor activity"/>
    <property type="evidence" value="ECO:0000318"/>
    <property type="project" value="GO_Central"/>
</dbReference>
<dbReference type="GO" id="GO:0006915">
    <property type="term" value="P:apoptotic process"/>
    <property type="evidence" value="ECO:0000303"/>
    <property type="project" value="UniProtKB"/>
</dbReference>
<dbReference type="GO" id="GO:0007254">
    <property type="term" value="P:JNK cascade"/>
    <property type="evidence" value="ECO:0000303"/>
    <property type="project" value="UniProtKB"/>
</dbReference>
<dbReference type="GO" id="GO:0030032">
    <property type="term" value="P:lamellipodium assembly"/>
    <property type="evidence" value="ECO:0000250"/>
    <property type="project" value="UniProtKB"/>
</dbReference>
<dbReference type="CDD" id="cd21265">
    <property type="entry name" value="CH_alphaPIX"/>
    <property type="match status" value="1"/>
</dbReference>
<dbReference type="CDD" id="cd01225">
    <property type="entry name" value="PH_Cool_Pix"/>
    <property type="match status" value="1"/>
</dbReference>
<dbReference type="CDD" id="cd00160">
    <property type="entry name" value="RhoGEF"/>
    <property type="match status" value="1"/>
</dbReference>
<dbReference type="CDD" id="cd12060">
    <property type="entry name" value="SH3_alphaPIX"/>
    <property type="match status" value="1"/>
</dbReference>
<dbReference type="FunFam" id="2.30.30.40:FF:000034">
    <property type="entry name" value="Rho guanine nucleotide exchange factor (GEF) 7"/>
    <property type="match status" value="1"/>
</dbReference>
<dbReference type="FunFam" id="1.20.900.10:FF:000016">
    <property type="entry name" value="Rho guanine nucleotide exchange factor 6"/>
    <property type="match status" value="1"/>
</dbReference>
<dbReference type="FunFam" id="2.30.29.30:FF:000094">
    <property type="entry name" value="Rho guanine nucleotide exchange factor 7"/>
    <property type="match status" value="1"/>
</dbReference>
<dbReference type="FunFam" id="1.10.418.10:FF:000049">
    <property type="entry name" value="Rho guanine nucleotide exchange factor 7 isoform X1"/>
    <property type="match status" value="1"/>
</dbReference>
<dbReference type="FunFam" id="1.20.5.390:FF:000001">
    <property type="entry name" value="rho guanine nucleotide exchange factor 7 isoform X1"/>
    <property type="match status" value="1"/>
</dbReference>
<dbReference type="Gene3D" id="1.10.418.10">
    <property type="entry name" value="Calponin-like domain"/>
    <property type="match status" value="1"/>
</dbReference>
<dbReference type="Gene3D" id="1.20.900.10">
    <property type="entry name" value="Dbl homology (DH) domain"/>
    <property type="match status" value="1"/>
</dbReference>
<dbReference type="Gene3D" id="1.20.5.390">
    <property type="entry name" value="L1 transposable element, trimerization domain"/>
    <property type="match status" value="1"/>
</dbReference>
<dbReference type="Gene3D" id="2.30.29.30">
    <property type="entry name" value="Pleckstrin-homology domain (PH domain)/Phosphotyrosine-binding domain (PTB)"/>
    <property type="match status" value="1"/>
</dbReference>
<dbReference type="Gene3D" id="2.30.30.40">
    <property type="entry name" value="SH3 Domains"/>
    <property type="match status" value="1"/>
</dbReference>
<dbReference type="InterPro" id="IPR035788">
    <property type="entry name" value="AlphaPIX_SH3"/>
</dbReference>
<dbReference type="InterPro" id="IPR001715">
    <property type="entry name" value="CH_dom"/>
</dbReference>
<dbReference type="InterPro" id="IPR036872">
    <property type="entry name" value="CH_dom_sf"/>
</dbReference>
<dbReference type="InterPro" id="IPR035899">
    <property type="entry name" value="DBL_dom_sf"/>
</dbReference>
<dbReference type="InterPro" id="IPR000219">
    <property type="entry name" value="DH_dom"/>
</dbReference>
<dbReference type="InterPro" id="IPR032409">
    <property type="entry name" value="GEF6/7_CC"/>
</dbReference>
<dbReference type="InterPro" id="IPR011993">
    <property type="entry name" value="PH-like_dom_sf"/>
</dbReference>
<dbReference type="InterPro" id="IPR046376">
    <property type="entry name" value="PH_Cool_Pix"/>
</dbReference>
<dbReference type="InterPro" id="IPR001849">
    <property type="entry name" value="PH_domain"/>
</dbReference>
<dbReference type="InterPro" id="IPR036028">
    <property type="entry name" value="SH3-like_dom_sf"/>
</dbReference>
<dbReference type="InterPro" id="IPR001452">
    <property type="entry name" value="SH3_domain"/>
</dbReference>
<dbReference type="InterPro" id="IPR003096">
    <property type="entry name" value="SM22_calponin"/>
</dbReference>
<dbReference type="PANTHER" id="PTHR46026:SF2">
    <property type="entry name" value="RHO GUANINE NUCLEOTIDE EXCHANGE FACTOR 6"/>
    <property type="match status" value="1"/>
</dbReference>
<dbReference type="PANTHER" id="PTHR46026">
    <property type="entry name" value="RHO-TYPE GUANINE NUCLEOTIDE EXCHANGE FACTOR, ISOFORM F"/>
    <property type="match status" value="1"/>
</dbReference>
<dbReference type="Pfam" id="PF16523">
    <property type="entry name" value="betaPIX_CC"/>
    <property type="match status" value="1"/>
</dbReference>
<dbReference type="Pfam" id="PF00307">
    <property type="entry name" value="CH"/>
    <property type="match status" value="1"/>
</dbReference>
<dbReference type="Pfam" id="PF00169">
    <property type="entry name" value="PH"/>
    <property type="match status" value="1"/>
</dbReference>
<dbReference type="Pfam" id="PF00621">
    <property type="entry name" value="RhoGEF"/>
    <property type="match status" value="1"/>
</dbReference>
<dbReference type="Pfam" id="PF16615">
    <property type="entry name" value="RhoGEF67_u1"/>
    <property type="match status" value="1"/>
</dbReference>
<dbReference type="Pfam" id="PF16614">
    <property type="entry name" value="RhoGEF67_u2"/>
    <property type="match status" value="1"/>
</dbReference>
<dbReference type="Pfam" id="PF07653">
    <property type="entry name" value="SH3_2"/>
    <property type="match status" value="1"/>
</dbReference>
<dbReference type="PRINTS" id="PR00452">
    <property type="entry name" value="SH3DOMAIN"/>
</dbReference>
<dbReference type="PRINTS" id="PR00888">
    <property type="entry name" value="SM22CALPONIN"/>
</dbReference>
<dbReference type="SMART" id="SM00033">
    <property type="entry name" value="CH"/>
    <property type="match status" value="1"/>
</dbReference>
<dbReference type="SMART" id="SM00233">
    <property type="entry name" value="PH"/>
    <property type="match status" value="1"/>
</dbReference>
<dbReference type="SMART" id="SM00325">
    <property type="entry name" value="RhoGEF"/>
    <property type="match status" value="1"/>
</dbReference>
<dbReference type="SMART" id="SM00326">
    <property type="entry name" value="SH3"/>
    <property type="match status" value="1"/>
</dbReference>
<dbReference type="SUPFAM" id="SSF47576">
    <property type="entry name" value="Calponin-homology domain, CH-domain"/>
    <property type="match status" value="1"/>
</dbReference>
<dbReference type="SUPFAM" id="SSF48065">
    <property type="entry name" value="DBL homology domain (DH-domain)"/>
    <property type="match status" value="1"/>
</dbReference>
<dbReference type="SUPFAM" id="SSF50729">
    <property type="entry name" value="PH domain-like"/>
    <property type="match status" value="1"/>
</dbReference>
<dbReference type="SUPFAM" id="SSF50044">
    <property type="entry name" value="SH3-domain"/>
    <property type="match status" value="1"/>
</dbReference>
<dbReference type="PROSITE" id="PS50021">
    <property type="entry name" value="CH"/>
    <property type="match status" value="1"/>
</dbReference>
<dbReference type="PROSITE" id="PS50010">
    <property type="entry name" value="DH_2"/>
    <property type="match status" value="1"/>
</dbReference>
<dbReference type="PROSITE" id="PS50003">
    <property type="entry name" value="PH_DOMAIN"/>
    <property type="match status" value="1"/>
</dbReference>
<dbReference type="PROSITE" id="PS50002">
    <property type="entry name" value="SH3"/>
    <property type="match status" value="1"/>
</dbReference>
<accession>Q15052</accession>
<accession>A6NMW9</accession>
<accession>A8K6S7</accession>
<accession>B1AL37</accession>
<accession>Q15396</accession>
<accession>Q5JQ66</accession>
<accession>Q7Z3W1</accession>
<accession>Q86XH0</accession>
<sequence>MNPEEQIVTWLISLGVLESPKKTICDPEEFLKSSLKNGVVLCKLINRLMPGSVEKFCLDPQTEADCINNINDFLKGCATLQVEIFDPDDLYSGVNFSKVLSTLLAVNKATEDQLSERPCGRSSSLSAANTSQTNPQGAVSSTVSGLQRQSKTVEMTENGSHQLIVKARFNFKQTNEDELSVCKGDIIYVTRVEEGGWWEGTLNGRTGWFPSNYVREIKSSERPLSPKAVKGFETAPLTKNYYTVVLQNILDTEKEYAKELQSLLVTYLRPLQSNNNLSTVEVTSLLGNFEEVCTFQQTLCQALEECSKFPENQHKVGGCLLSLMPHFKSMYLAYCANHPSAVNVLTQHSDELEQFMENQGASSPGILILTTNLSKPFMRLEKYVTLLQELERHMEDTHPDHQDILKAIVAFKTLMGQCQDLRKRKQLELQILSEPIQAWEGEDIKNLGNVIFMSQVMVQYGACEEKEERYLMLFSNVLIMLSASPRMSGFIYQGKIPIAGTVVTRLDEIEGNDCTFEITGNTVERIVVHCNNNQDFQEWLEQLNRLIRGPASCSSLSKTSSSSCSAHSSFSSTGQPRGPLEPPQIIKPWSLSCLRPAPPLRPSAALGYKERMSYILKESSKSPKTMKKFLHKRKTERKPSEEEYVIRKSTAALEEDAQILKVIEAYCTSANFQQGHGSSTRKDSIPQVLLPEEEKLIIEETRSNGQTIMEEKSLVDTVYALKDEVRELKQENKRMKQCLEEELKSRRDLEKLVRRLLKQTDECIRGESSSKTSILP</sequence>
<organism>
    <name type="scientific">Homo sapiens</name>
    <name type="common">Human</name>
    <dbReference type="NCBI Taxonomy" id="9606"/>
    <lineage>
        <taxon>Eukaryota</taxon>
        <taxon>Metazoa</taxon>
        <taxon>Chordata</taxon>
        <taxon>Craniata</taxon>
        <taxon>Vertebrata</taxon>
        <taxon>Euteleostomi</taxon>
        <taxon>Mammalia</taxon>
        <taxon>Eutheria</taxon>
        <taxon>Euarchontoglires</taxon>
        <taxon>Primates</taxon>
        <taxon>Haplorrhini</taxon>
        <taxon>Catarrhini</taxon>
        <taxon>Hominidae</taxon>
        <taxon>Homo</taxon>
    </lineage>
</organism>
<keyword id="KW-0002">3D-structure</keyword>
<keyword id="KW-0025">Alternative splicing</keyword>
<keyword id="KW-0966">Cell projection</keyword>
<keyword id="KW-0344">Guanine-nucleotide releasing factor</keyword>
<keyword id="KW-0597">Phosphoprotein</keyword>
<keyword id="KW-1267">Proteomics identification</keyword>
<keyword id="KW-1185">Reference proteome</keyword>
<keyword id="KW-0728">SH3 domain</keyword>
<name>ARHG6_HUMAN</name>
<comment type="function">
    <text>Acts as a RAC1 guanine nucleotide exchange factor (GEF).</text>
</comment>
<comment type="subunit">
    <text evidence="1 7 8 9">Interacts with PAK kinases through the SH3 domain. Interacts with GIT1. Component of cytoplasmic complexes, which also contain PXN, GIT1 and PAK1 (By similarity). Interacts with PARVB. Interacts with BIN2. Identified in a complex with BIN2 and GIT2. Interacts with PARVG; the guanine nucleotide exchange factor activity of ARHGEF6 is essential for PARVG-induced enhancement of cell spreading (PubMed:16517730).</text>
</comment>
<comment type="interaction">
    <interactant intactId="EBI-1642523">
        <id>Q15052</id>
    </interactant>
    <interactant intactId="EBI-466061">
        <id>Q9Y2X7</id>
        <label>GIT1</label>
    </interactant>
    <organismsDiffer>false</organismsDiffer>
    <experiments>3</experiments>
</comment>
<comment type="interaction">
    <interactant intactId="EBI-1642523">
        <id>Q15052</id>
    </interactant>
    <interactant intactId="EBI-12028686">
        <id>Q14161-11</id>
        <label>GIT2</label>
    </interactant>
    <organismsDiffer>false</organismsDiffer>
    <experiments>9</experiments>
</comment>
<comment type="interaction">
    <interactant intactId="EBI-1642523">
        <id>Q15052</id>
    </interactant>
    <interactant intactId="EBI-618309">
        <id>Q08379</id>
        <label>GOLGA2</label>
    </interactant>
    <organismsDiffer>false</organismsDiffer>
    <experiments>3</experiments>
</comment>
<comment type="interaction">
    <interactant intactId="EBI-1642523">
        <id>Q15052</id>
    </interactant>
    <interactant intactId="EBI-7116203">
        <id>O75031</id>
        <label>HSF2BP</label>
    </interactant>
    <organismsDiffer>false</organismsDiffer>
    <experiments>3</experiments>
</comment>
<comment type="interaction">
    <interactant intactId="EBI-1642523">
        <id>Q15052</id>
    </interactant>
    <interactant intactId="EBI-747204">
        <id>Q9UKT9</id>
        <label>IKZF3</label>
    </interactant>
    <organismsDiffer>false</organismsDiffer>
    <experiments>3</experiments>
</comment>
<comment type="interaction">
    <interactant intactId="EBI-1642523">
        <id>Q15052</id>
    </interactant>
    <interactant intactId="EBI-3044087">
        <id>Q7Z3Y8</id>
        <label>KRT27</label>
    </interactant>
    <organismsDiffer>false</organismsDiffer>
    <experiments>3</experiments>
</comment>
<comment type="interaction">
    <interactant intactId="EBI-1642523">
        <id>Q15052</id>
    </interactant>
    <interactant intactId="EBI-747693">
        <id>P41227</id>
        <label>NAA10</label>
    </interactant>
    <organismsDiffer>false</organismsDiffer>
    <experiments>3</experiments>
</comment>
<comment type="interaction">
    <interactant intactId="EBI-1642523">
        <id>Q15052</id>
    </interactant>
    <interactant intactId="EBI-1307">
        <id>Q13153</id>
        <label>PAK1</label>
    </interactant>
    <organismsDiffer>false</organismsDiffer>
    <experiments>7</experiments>
</comment>
<comment type="interaction">
    <interactant intactId="EBI-1642523">
        <id>Q15052</id>
    </interactant>
    <interactant intactId="EBI-1045887">
        <id>Q13177</id>
        <label>PAK2</label>
    </interactant>
    <organismsDiffer>false</organismsDiffer>
    <experiments>8</experiments>
</comment>
<comment type="interaction">
    <interactant intactId="EBI-1642523">
        <id>Q15052</id>
    </interactant>
    <interactant intactId="EBI-302345">
        <id>Q8ND90</id>
        <label>PNMA1</label>
    </interactant>
    <organismsDiffer>false</organismsDiffer>
    <experiments>3</experiments>
</comment>
<comment type="interaction">
    <interactant intactId="EBI-1642523">
        <id>Q15052</id>
    </interactant>
    <interactant intactId="EBI-12029004">
        <id>P78424</id>
        <label>POU6F2</label>
    </interactant>
    <organismsDiffer>false</organismsDiffer>
    <experiments>3</experiments>
</comment>
<comment type="interaction">
    <interactant intactId="EBI-1642523">
        <id>Q15052</id>
    </interactant>
    <interactant intactId="EBI-17677006">
        <id>Q9UIY3</id>
        <label>RWDD2A</label>
    </interactant>
    <organismsDiffer>false</organismsDiffer>
    <experiments>3</experiments>
</comment>
<comment type="interaction">
    <interactant intactId="EBI-1642523">
        <id>Q15052</id>
    </interactant>
    <interactant intactId="EBI-15552052">
        <id>O60880-1</id>
        <label>SH2D1A</label>
    </interactant>
    <organismsDiffer>false</organismsDiffer>
    <experiments>3</experiments>
</comment>
<comment type="interaction">
    <interactant intactId="EBI-1642523">
        <id>Q15052</id>
    </interactant>
    <interactant intactId="EBI-11952721">
        <id>Q05BL1</id>
        <label>TP53BP2</label>
    </interactant>
    <organismsDiffer>false</organismsDiffer>
    <experiments>3</experiments>
</comment>
<comment type="interaction">
    <interactant intactId="EBI-1642523">
        <id>Q15052</id>
    </interactant>
    <interactant intactId="EBI-355744">
        <id>Q12933</id>
        <label>TRAF2</label>
    </interactant>
    <organismsDiffer>false</organismsDiffer>
    <experiments>3</experiments>
</comment>
<comment type="interaction">
    <interactant intactId="EBI-1642523">
        <id>Q15052</id>
    </interactant>
    <interactant intactId="EBI-2130429">
        <id>Q9BYV2</id>
        <label>TRIM54</label>
    </interactant>
    <organismsDiffer>false</organismsDiffer>
    <experiments>3</experiments>
</comment>
<comment type="subcellular location">
    <subcellularLocation>
        <location evidence="1">Cell projection</location>
        <location evidence="1">Lamellipodium</location>
    </subcellularLocation>
</comment>
<comment type="alternative products">
    <event type="alternative splicing"/>
    <isoform>
        <id>Q15052-1</id>
        <name>1</name>
        <sequence type="displayed"/>
    </isoform>
    <isoform>
        <id>Q15052-2</id>
        <name>2</name>
        <sequence type="described" ref="VSP_015782"/>
    </isoform>
</comment>
<comment type="tissue specificity">
    <text>Ubiquitous.</text>
</comment>
<comment type="sequence caution" evidence="12">
    <conflict type="erroneous initiation">
        <sequence resource="EMBL-CDS" id="BAA02796"/>
    </conflict>
</comment>
<feature type="chain" id="PRO_0000080917" description="Rho guanine nucleotide exchange factor 6">
    <location>
        <begin position="1"/>
        <end position="776"/>
    </location>
</feature>
<feature type="domain" description="Calponin-homology (CH)" evidence="2">
    <location>
        <begin position="1"/>
        <end position="111"/>
    </location>
</feature>
<feature type="domain" description="SH3" evidence="5">
    <location>
        <begin position="160"/>
        <end position="219"/>
    </location>
</feature>
<feature type="domain" description="DH" evidence="3">
    <location>
        <begin position="241"/>
        <end position="421"/>
    </location>
</feature>
<feature type="domain" description="PH" evidence="4">
    <location>
        <begin position="443"/>
        <end position="548"/>
    </location>
</feature>
<feature type="region of interest" description="Disordered" evidence="6">
    <location>
        <begin position="115"/>
        <end position="151"/>
    </location>
</feature>
<feature type="region of interest" description="Disordered" evidence="6">
    <location>
        <begin position="561"/>
        <end position="581"/>
    </location>
</feature>
<feature type="compositionally biased region" description="Polar residues" evidence="6">
    <location>
        <begin position="121"/>
        <end position="151"/>
    </location>
</feature>
<feature type="compositionally biased region" description="Low complexity" evidence="6">
    <location>
        <begin position="561"/>
        <end position="572"/>
    </location>
</feature>
<feature type="modified residue" description="Phosphoserine" evidence="14">
    <location>
        <position position="126"/>
    </location>
</feature>
<feature type="modified residue" description="Phosphothreonine" evidence="16">
    <location>
        <position position="133"/>
    </location>
</feature>
<feature type="modified residue" description="Phosphoserine" evidence="14">
    <location>
        <position position="144"/>
    </location>
</feature>
<feature type="modified residue" description="Phosphoserine" evidence="13 14">
    <location>
        <position position="150"/>
    </location>
</feature>
<feature type="modified residue" description="Phosphoserine" evidence="16">
    <location>
        <position position="225"/>
    </location>
</feature>
<feature type="modified residue" description="Phosphoserine" evidence="1">
    <location>
        <position position="488"/>
    </location>
</feature>
<feature type="modified residue" description="Phosphoserine" evidence="14">
    <location>
        <position position="640"/>
    </location>
</feature>
<feature type="modified residue" description="Phosphoserine" evidence="14 15 16">
    <location>
        <position position="684"/>
    </location>
</feature>
<feature type="splice variant" id="VSP_015782" description="In isoform 2." evidence="10 11">
    <location>
        <begin position="1"/>
        <end position="154"/>
    </location>
</feature>
<feature type="sequence variant" id="VAR_051981" description="In dbSNP:rs5974620.">
    <original>Q</original>
    <variation>H</variation>
    <location>
        <position position="297"/>
    </location>
</feature>
<feature type="sequence conflict" description="In Ref. 2; CAD97632." evidence="12" ref="2">
    <original>E</original>
    <variation>G</variation>
    <location>
        <position position="199"/>
    </location>
</feature>
<feature type="helix" evidence="18">
    <location>
        <begin position="4"/>
        <end position="14"/>
    </location>
</feature>
<feature type="helix" evidence="18">
    <location>
        <begin position="27"/>
        <end position="37"/>
    </location>
</feature>
<feature type="helix" evidence="18">
    <location>
        <begin position="39"/>
        <end position="48"/>
    </location>
</feature>
<feature type="helix" evidence="18">
    <location>
        <begin position="63"/>
        <end position="80"/>
    </location>
</feature>
<feature type="helix" evidence="18">
    <location>
        <begin position="87"/>
        <end position="91"/>
    </location>
</feature>
<feature type="helix" evidence="18">
    <location>
        <begin position="96"/>
        <end position="110"/>
    </location>
</feature>
<feature type="strand" evidence="17">
    <location>
        <begin position="163"/>
        <end position="166"/>
    </location>
</feature>
<feature type="strand" evidence="17">
    <location>
        <begin position="187"/>
        <end position="191"/>
    </location>
</feature>
<feature type="strand" evidence="17">
    <location>
        <begin position="194"/>
        <end position="196"/>
    </location>
</feature>
<feature type="strand" evidence="17">
    <location>
        <begin position="198"/>
        <end position="202"/>
    </location>
</feature>
<feature type="strand" evidence="17">
    <location>
        <begin position="205"/>
        <end position="209"/>
    </location>
</feature>
<feature type="turn" evidence="17">
    <location>
        <begin position="211"/>
        <end position="213"/>
    </location>
</feature>
<feature type="strand" evidence="17">
    <location>
        <begin position="214"/>
        <end position="216"/>
    </location>
</feature>
<feature type="helix" evidence="17">
    <location>
        <begin position="219"/>
        <end position="222"/>
    </location>
</feature>
<gene>
    <name type="primary">ARHGEF6</name>
    <name type="synonym">COOL2</name>
    <name type="synonym">KIAA0006</name>
    <name type="synonym">PIXA</name>
</gene>